<comment type="catalytic activity">
    <reaction evidence="1">
        <text>tRNA(Gly) + glycine + ATP = glycyl-tRNA(Gly) + AMP + diphosphate</text>
        <dbReference type="Rhea" id="RHEA:16013"/>
        <dbReference type="Rhea" id="RHEA-COMP:9664"/>
        <dbReference type="Rhea" id="RHEA-COMP:9683"/>
        <dbReference type="ChEBI" id="CHEBI:30616"/>
        <dbReference type="ChEBI" id="CHEBI:33019"/>
        <dbReference type="ChEBI" id="CHEBI:57305"/>
        <dbReference type="ChEBI" id="CHEBI:78442"/>
        <dbReference type="ChEBI" id="CHEBI:78522"/>
        <dbReference type="ChEBI" id="CHEBI:456215"/>
        <dbReference type="EC" id="6.1.1.14"/>
    </reaction>
</comment>
<comment type="subunit">
    <text evidence="1">Tetramer of two alpha and two beta subunits.</text>
</comment>
<comment type="subcellular location">
    <subcellularLocation>
        <location evidence="1">Cytoplasm</location>
    </subcellularLocation>
</comment>
<comment type="similarity">
    <text evidence="1">Belongs to the class-II aminoacyl-tRNA synthetase family.</text>
</comment>
<dbReference type="EC" id="6.1.1.14" evidence="1"/>
<dbReference type="EMBL" id="CP000438">
    <property type="protein sequence ID" value="ABJ14964.1"/>
    <property type="molecule type" value="Genomic_DNA"/>
</dbReference>
<dbReference type="RefSeq" id="WP_003100271.1">
    <property type="nucleotide sequence ID" value="NZ_CP034244.1"/>
</dbReference>
<dbReference type="SMR" id="Q02V73"/>
<dbReference type="KEGG" id="pau:PA14_00090"/>
<dbReference type="PseudoCAP" id="PA14_00090"/>
<dbReference type="HOGENOM" id="CLU_007220_2_2_6"/>
<dbReference type="BioCyc" id="PAER208963:G1G74-8-MONOMER"/>
<dbReference type="Proteomes" id="UP000000653">
    <property type="component" value="Chromosome"/>
</dbReference>
<dbReference type="GO" id="GO:0005829">
    <property type="term" value="C:cytosol"/>
    <property type="evidence" value="ECO:0007669"/>
    <property type="project" value="TreeGrafter"/>
</dbReference>
<dbReference type="GO" id="GO:0004814">
    <property type="term" value="F:arginine-tRNA ligase activity"/>
    <property type="evidence" value="ECO:0007669"/>
    <property type="project" value="InterPro"/>
</dbReference>
<dbReference type="GO" id="GO:0005524">
    <property type="term" value="F:ATP binding"/>
    <property type="evidence" value="ECO:0007669"/>
    <property type="project" value="UniProtKB-UniRule"/>
</dbReference>
<dbReference type="GO" id="GO:0004820">
    <property type="term" value="F:glycine-tRNA ligase activity"/>
    <property type="evidence" value="ECO:0007669"/>
    <property type="project" value="UniProtKB-UniRule"/>
</dbReference>
<dbReference type="GO" id="GO:0006420">
    <property type="term" value="P:arginyl-tRNA aminoacylation"/>
    <property type="evidence" value="ECO:0007669"/>
    <property type="project" value="InterPro"/>
</dbReference>
<dbReference type="GO" id="GO:0006426">
    <property type="term" value="P:glycyl-tRNA aminoacylation"/>
    <property type="evidence" value="ECO:0007669"/>
    <property type="project" value="UniProtKB-UniRule"/>
</dbReference>
<dbReference type="HAMAP" id="MF_00255">
    <property type="entry name" value="Gly_tRNA_synth_beta"/>
    <property type="match status" value="1"/>
</dbReference>
<dbReference type="InterPro" id="IPR008909">
    <property type="entry name" value="DALR_anticod-bd"/>
</dbReference>
<dbReference type="InterPro" id="IPR015944">
    <property type="entry name" value="Gly-tRNA-synth_bsu"/>
</dbReference>
<dbReference type="InterPro" id="IPR006194">
    <property type="entry name" value="Gly-tRNA-synth_heterodimer"/>
</dbReference>
<dbReference type="NCBIfam" id="TIGR00211">
    <property type="entry name" value="glyS"/>
    <property type="match status" value="1"/>
</dbReference>
<dbReference type="PANTHER" id="PTHR30075:SF2">
    <property type="entry name" value="GLYCINE--TRNA LIGASE, CHLOROPLASTIC_MITOCHONDRIAL 2"/>
    <property type="match status" value="1"/>
</dbReference>
<dbReference type="PANTHER" id="PTHR30075">
    <property type="entry name" value="GLYCYL-TRNA SYNTHETASE"/>
    <property type="match status" value="1"/>
</dbReference>
<dbReference type="Pfam" id="PF05746">
    <property type="entry name" value="DALR_1"/>
    <property type="match status" value="1"/>
</dbReference>
<dbReference type="Pfam" id="PF02092">
    <property type="entry name" value="tRNA_synt_2f"/>
    <property type="match status" value="1"/>
</dbReference>
<dbReference type="PRINTS" id="PR01045">
    <property type="entry name" value="TRNASYNTHGB"/>
</dbReference>
<dbReference type="SMART" id="SM00836">
    <property type="entry name" value="DALR_1"/>
    <property type="match status" value="1"/>
</dbReference>
<dbReference type="SUPFAM" id="SSF109604">
    <property type="entry name" value="HD-domain/PDEase-like"/>
    <property type="match status" value="1"/>
</dbReference>
<dbReference type="PROSITE" id="PS50861">
    <property type="entry name" value="AA_TRNA_LIGASE_II_GLYAB"/>
    <property type="match status" value="1"/>
</dbReference>
<gene>
    <name evidence="1" type="primary">glyS</name>
    <name type="ordered locus">PA14_00090</name>
</gene>
<protein>
    <recommendedName>
        <fullName evidence="1">Glycine--tRNA ligase beta subunit</fullName>
        <ecNumber evidence="1">6.1.1.14</ecNumber>
    </recommendedName>
    <alternativeName>
        <fullName evidence="1">Glycyl-tRNA synthetase beta subunit</fullName>
        <shortName evidence="1">GlyRS</shortName>
    </alternativeName>
</protein>
<feature type="chain" id="PRO_1000006387" description="Glycine--tRNA ligase beta subunit">
    <location>
        <begin position="1"/>
        <end position="684"/>
    </location>
</feature>
<evidence type="ECO:0000255" key="1">
    <source>
        <dbReference type="HAMAP-Rule" id="MF_00255"/>
    </source>
</evidence>
<name>SYGB_PSEAB</name>
<accession>Q02V73</accession>
<keyword id="KW-0030">Aminoacyl-tRNA synthetase</keyword>
<keyword id="KW-0067">ATP-binding</keyword>
<keyword id="KW-0963">Cytoplasm</keyword>
<keyword id="KW-0436">Ligase</keyword>
<keyword id="KW-0547">Nucleotide-binding</keyword>
<keyword id="KW-0648">Protein biosynthesis</keyword>
<proteinExistence type="inferred from homology"/>
<sequence>MSAKDFLVELGTEELPPKALNSLGEAFLSGIEKGLKAAGLSYAAARFYAAPRRLAVLVEQLAVQQPDRTVNLDGPPLQAAFDASGNPTQAALGFAKKCGVDLQQIDKSGPKLRFSQTIAGQPAAGLLPGIVEASLNELPIPKRMRWAARREEFVRPTQWLVMLFGDDVVECEILAQKAGRESRGHRFHNPDNVRISSPAAYLEDLRGAHVLADFAERRELIAKRVAELAAEQQGSAIVPPSLLDEVTALVEWPVPLVCSFEERFLEVPQEALITTMQDNQKYFCLLDANGKLLPRFITVANVESKAPENIVSGNEKVVRPRLTDAEFFFKQDKKQPLESFNERLRNVVFQAQLGTVFEKAQRVSGLAAYIAERIGGNAQNAARAGILSKCDLATEMVGEFPEMQGIAGYYYATHGGEAEDVALALNEQYMPRGAGAELPSTLTGAAVAVADKLDTLVGIFGIGMLPTGSKDPYALRRAALGVLRILIEKQLDLDLVAAVNAAVEQYGDKVKAAGLAEQVLDFVFDRLRARYEDEGVDVAVYQSVRALKPSSPLDFDQRVQAVQAFRQLPEAEALAAANKRVSNILAKSEDEVPPNVDASLLVEAAEKALGSAVANAESEVAPLAAARDYRAALARLAALREPVDTFFADVMVNVDDAAVRANRYALLAKLRGSFLGVADISLLG</sequence>
<organism>
    <name type="scientific">Pseudomonas aeruginosa (strain UCBPP-PA14)</name>
    <dbReference type="NCBI Taxonomy" id="208963"/>
    <lineage>
        <taxon>Bacteria</taxon>
        <taxon>Pseudomonadati</taxon>
        <taxon>Pseudomonadota</taxon>
        <taxon>Gammaproteobacteria</taxon>
        <taxon>Pseudomonadales</taxon>
        <taxon>Pseudomonadaceae</taxon>
        <taxon>Pseudomonas</taxon>
    </lineage>
</organism>
<reference key="1">
    <citation type="journal article" date="2006" name="Genome Biol.">
        <title>Genomic analysis reveals that Pseudomonas aeruginosa virulence is combinatorial.</title>
        <authorList>
            <person name="Lee D.G."/>
            <person name="Urbach J.M."/>
            <person name="Wu G."/>
            <person name="Liberati N.T."/>
            <person name="Feinbaum R.L."/>
            <person name="Miyata S."/>
            <person name="Diggins L.T."/>
            <person name="He J."/>
            <person name="Saucier M."/>
            <person name="Deziel E."/>
            <person name="Friedman L."/>
            <person name="Li L."/>
            <person name="Grills G."/>
            <person name="Montgomery K."/>
            <person name="Kucherlapati R."/>
            <person name="Rahme L.G."/>
            <person name="Ausubel F.M."/>
        </authorList>
    </citation>
    <scope>NUCLEOTIDE SEQUENCE [LARGE SCALE GENOMIC DNA]</scope>
    <source>
        <strain>UCBPP-PA14</strain>
    </source>
</reference>